<comment type="function">
    <text evidence="1">Catalyzes the formation of succinate and glyoxylate from isocitrate, a key step of the glyoxylate cycle, which operates as an anaplerotic route for replenishing the tricarboxylic acid cycle. Required for growth on ethanol or acetate, but dispensable when fermentable carbon sources are available. Also acts on 2-methylisocitrate.</text>
</comment>
<comment type="catalytic activity">
    <reaction evidence="1">
        <text>D-threo-isocitrate = glyoxylate + succinate</text>
        <dbReference type="Rhea" id="RHEA:13245"/>
        <dbReference type="ChEBI" id="CHEBI:15562"/>
        <dbReference type="ChEBI" id="CHEBI:30031"/>
        <dbReference type="ChEBI" id="CHEBI:36655"/>
        <dbReference type="EC" id="4.1.3.1"/>
    </reaction>
</comment>
<comment type="catalytic activity">
    <reaction evidence="1">
        <text>(2S,3R)-3-hydroxybutane-1,2,3-tricarboxylate = pyruvate + succinate</text>
        <dbReference type="Rhea" id="RHEA:16809"/>
        <dbReference type="ChEBI" id="CHEBI:15361"/>
        <dbReference type="ChEBI" id="CHEBI:30031"/>
        <dbReference type="ChEBI" id="CHEBI:57429"/>
        <dbReference type="EC" id="4.1.3.30"/>
    </reaction>
</comment>
<comment type="cofactor">
    <cofactor evidence="3">
        <name>Mg(2+)</name>
        <dbReference type="ChEBI" id="CHEBI:18420"/>
    </cofactor>
</comment>
<comment type="pathway">
    <text>Carbohydrate metabolism; glyoxylate cycle; (S)-malate from isocitrate: step 1/2.</text>
</comment>
<comment type="subunit">
    <text evidence="1">Homotetramer.</text>
</comment>
<comment type="subcellular location">
    <subcellularLocation>
        <location evidence="2">Glyoxysome</location>
    </subcellularLocation>
</comment>
<comment type="induction">
    <text evidence="4">Repressed by glucose.</text>
</comment>
<comment type="similarity">
    <text evidence="6">Belongs to the isocitrate lyase/PEP mutase superfamily. Isocitrate lyase family.</text>
</comment>
<sequence length="542" mass="60382">MVSVKASAAEKKEFLQSQIDEIEKWWSEPRWKDTKRIYSAYEIAKRRGSVKPNTFPSTVMSQKLFKILGEHAKNGTVSKTFGALDPVQVTQMSKYLDTIYVSGWQCSSTASTSNEPGPDLADYPMDTVPNKVEHLFKAQQFHDRKQWERICDGTIEESEIIDYLTPIVADGDAGHGGLTAVFKLTKMFIERGAAGIHIEDQTSTNKKCGHMAGRCVIPVQEHINRLITCRMAADVLGSDLILVARTDSEAATLLSSTADSRDHYFILGASNPAVKGKPLNDLLNKAILDGATIDDLQTIEKEWLAKADVKLFHEVFADAAKAAGKDQSVIDQFNSKVNPLSETSIYEMQALAKELLGTELFFDWDLPRGREGLYRYQGGTQCSVMRARAFAPYADLCWMESNYPDYEQAKEFAEGVTAKFPGKWMAYNLSPSFNWTKAMSVDEQETFIQRLGDLGYIWQFITLAGLHTSGLAIEQFSKNFAKLGMKAYAQDIQKKELDNGIDMVKHQKWSGAEYIDGLLRLAQGGLAATAAMGQGVTEDQFK</sequence>
<gene>
    <name evidence="5" type="primary">ICL1</name>
    <name type="ordered locus">KLLA0C08107g</name>
</gene>
<organism>
    <name type="scientific">Kluyveromyces lactis (strain ATCC 8585 / CBS 2359 / DSM 70799 / NBRC 1267 / NRRL Y-1140 / WM37)</name>
    <name type="common">Yeast</name>
    <name type="synonym">Candida sphaerica</name>
    <dbReference type="NCBI Taxonomy" id="284590"/>
    <lineage>
        <taxon>Eukaryota</taxon>
        <taxon>Fungi</taxon>
        <taxon>Dikarya</taxon>
        <taxon>Ascomycota</taxon>
        <taxon>Saccharomycotina</taxon>
        <taxon>Saccharomycetes</taxon>
        <taxon>Saccharomycetales</taxon>
        <taxon>Saccharomycetaceae</taxon>
        <taxon>Kluyveromyces</taxon>
    </lineage>
</organism>
<dbReference type="EC" id="4.1.3.1" evidence="1"/>
<dbReference type="EC" id="4.1.3.30" evidence="1"/>
<dbReference type="EMBL" id="AY124768">
    <property type="protein sequence ID" value="AAM75421.1"/>
    <property type="molecule type" value="Genomic_DNA"/>
</dbReference>
<dbReference type="EMBL" id="CR382123">
    <property type="protein sequence ID" value="CAH01411.1"/>
    <property type="molecule type" value="Genomic_DNA"/>
</dbReference>
<dbReference type="RefSeq" id="XP_452560.1">
    <property type="nucleotide sequence ID" value="XM_452560.1"/>
</dbReference>
<dbReference type="SMR" id="Q8NJ72"/>
<dbReference type="FunCoup" id="Q8NJ72">
    <property type="interactions" value="200"/>
</dbReference>
<dbReference type="STRING" id="284590.Q8NJ72"/>
<dbReference type="PaxDb" id="284590-Q8NJ72"/>
<dbReference type="KEGG" id="kla:KLLA0_C08107g"/>
<dbReference type="eggNOG" id="KOG1260">
    <property type="taxonomic scope" value="Eukaryota"/>
</dbReference>
<dbReference type="HOGENOM" id="CLU_019214_2_2_1"/>
<dbReference type="InParanoid" id="Q8NJ72"/>
<dbReference type="OMA" id="YVSGWQV"/>
<dbReference type="UniPathway" id="UPA00703">
    <property type="reaction ID" value="UER00719"/>
</dbReference>
<dbReference type="Proteomes" id="UP000000598">
    <property type="component" value="Chromosome C"/>
</dbReference>
<dbReference type="GO" id="GO:0009514">
    <property type="term" value="C:glyoxysome"/>
    <property type="evidence" value="ECO:0007669"/>
    <property type="project" value="UniProtKB-SubCell"/>
</dbReference>
<dbReference type="GO" id="GO:0004451">
    <property type="term" value="F:isocitrate lyase activity"/>
    <property type="evidence" value="ECO:0007669"/>
    <property type="project" value="UniProtKB-EC"/>
</dbReference>
<dbReference type="GO" id="GO:0046872">
    <property type="term" value="F:metal ion binding"/>
    <property type="evidence" value="ECO:0007669"/>
    <property type="project" value="UniProtKB-KW"/>
</dbReference>
<dbReference type="GO" id="GO:0046421">
    <property type="term" value="F:methylisocitrate lyase activity"/>
    <property type="evidence" value="ECO:0007669"/>
    <property type="project" value="UniProtKB-EC"/>
</dbReference>
<dbReference type="GO" id="GO:0006097">
    <property type="term" value="P:glyoxylate cycle"/>
    <property type="evidence" value="ECO:0007669"/>
    <property type="project" value="UniProtKB-UniPathway"/>
</dbReference>
<dbReference type="GO" id="GO:0006099">
    <property type="term" value="P:tricarboxylic acid cycle"/>
    <property type="evidence" value="ECO:0007669"/>
    <property type="project" value="UniProtKB-KW"/>
</dbReference>
<dbReference type="CDD" id="cd00377">
    <property type="entry name" value="ICL_PEPM"/>
    <property type="match status" value="1"/>
</dbReference>
<dbReference type="FunFam" id="1.10.10.850:FF:000001">
    <property type="entry name" value="Isocitrate lyase"/>
    <property type="match status" value="1"/>
</dbReference>
<dbReference type="Gene3D" id="1.10.10.850">
    <property type="match status" value="1"/>
</dbReference>
<dbReference type="Gene3D" id="3.20.20.60">
    <property type="entry name" value="Phosphoenolpyruvate-binding domains"/>
    <property type="match status" value="1"/>
</dbReference>
<dbReference type="InterPro" id="IPR039556">
    <property type="entry name" value="ICL/PEPM"/>
</dbReference>
<dbReference type="InterPro" id="IPR006254">
    <property type="entry name" value="Isocitrate_lyase"/>
</dbReference>
<dbReference type="InterPro" id="IPR018523">
    <property type="entry name" value="Isocitrate_lyase_ph_CS"/>
</dbReference>
<dbReference type="InterPro" id="IPR015813">
    <property type="entry name" value="Pyrv/PenolPyrv_kinase-like_dom"/>
</dbReference>
<dbReference type="InterPro" id="IPR040442">
    <property type="entry name" value="Pyrv_kinase-like_dom_sf"/>
</dbReference>
<dbReference type="NCBIfam" id="TIGR01346">
    <property type="entry name" value="isocit_lyase"/>
    <property type="match status" value="1"/>
</dbReference>
<dbReference type="PANTHER" id="PTHR21631:SF3">
    <property type="entry name" value="BIFUNCTIONAL GLYOXYLATE CYCLE PROTEIN"/>
    <property type="match status" value="1"/>
</dbReference>
<dbReference type="PANTHER" id="PTHR21631">
    <property type="entry name" value="ISOCITRATE LYASE/MALATE SYNTHASE"/>
    <property type="match status" value="1"/>
</dbReference>
<dbReference type="Pfam" id="PF00463">
    <property type="entry name" value="ICL"/>
    <property type="match status" value="1"/>
</dbReference>
<dbReference type="PIRSF" id="PIRSF001362">
    <property type="entry name" value="Isocit_lyase"/>
    <property type="match status" value="1"/>
</dbReference>
<dbReference type="SUPFAM" id="SSF51621">
    <property type="entry name" value="Phosphoenolpyruvate/pyruvate domain"/>
    <property type="match status" value="1"/>
</dbReference>
<dbReference type="PROSITE" id="PS00161">
    <property type="entry name" value="ISOCITRATE_LYASE"/>
    <property type="match status" value="1"/>
</dbReference>
<evidence type="ECO:0000250" key="1">
    <source>
        <dbReference type="UniProtKB" id="P28240"/>
    </source>
</evidence>
<evidence type="ECO:0000250" key="2">
    <source>
        <dbReference type="UniProtKB" id="P28299"/>
    </source>
</evidence>
<evidence type="ECO:0000250" key="3">
    <source>
        <dbReference type="UniProtKB" id="P9WKK7"/>
    </source>
</evidence>
<evidence type="ECO:0000269" key="4">
    <source>
    </source>
</evidence>
<evidence type="ECO:0000303" key="5">
    <source>
    </source>
</evidence>
<evidence type="ECO:0000305" key="6"/>
<keyword id="KW-0329">Glyoxylate bypass</keyword>
<keyword id="KW-0330">Glyoxysome</keyword>
<keyword id="KW-0456">Lyase</keyword>
<keyword id="KW-0460">Magnesium</keyword>
<keyword id="KW-0479">Metal-binding</keyword>
<keyword id="KW-0576">Peroxisome</keyword>
<keyword id="KW-1185">Reference proteome</keyword>
<keyword id="KW-0816">Tricarboxylic acid cycle</keyword>
<name>ACEA_KLULA</name>
<accession>Q8NJ72</accession>
<accession>Q6CU29</accession>
<protein>
    <recommendedName>
        <fullName evidence="5">Isocitrate lyase</fullName>
        <shortName evidence="6">ICL</shortName>
        <shortName evidence="6">Isocitrase</shortName>
        <shortName evidence="6">Isocitratase</shortName>
        <ecNumber evidence="1">4.1.3.1</ecNumber>
    </recommendedName>
    <alternativeName>
        <fullName evidence="1">Methylisocitrate lyase</fullName>
        <shortName evidence="6">MICA</shortName>
        <ecNumber evidence="1">4.1.3.30</ecNumber>
    </alternativeName>
    <alternativeName>
        <fullName evidence="6">Threo-D(S)-isocitrate glyoxylate-lyase</fullName>
    </alternativeName>
</protein>
<reference key="1">
    <citation type="journal article" date="2004" name="Curr. Genet.">
        <title>Isocitrate lyase of the yeast Kluyveromyces lactis is subject to glucose repression but not to catabolite inactivation.</title>
        <authorList>
            <person name="Lopez M.L."/>
            <person name="Redruello B."/>
            <person name="Valdes E."/>
            <person name="Moreno F."/>
            <person name="Heinisch J.J."/>
            <person name="Rodicio R."/>
        </authorList>
    </citation>
    <scope>NUCLEOTIDE SEQUENCE [GENOMIC DNA]</scope>
    <scope>INDUCTION</scope>
</reference>
<reference key="2">
    <citation type="journal article" date="2004" name="Nature">
        <title>Genome evolution in yeasts.</title>
        <authorList>
            <person name="Dujon B."/>
            <person name="Sherman D."/>
            <person name="Fischer G."/>
            <person name="Durrens P."/>
            <person name="Casaregola S."/>
            <person name="Lafontaine I."/>
            <person name="de Montigny J."/>
            <person name="Marck C."/>
            <person name="Neuveglise C."/>
            <person name="Talla E."/>
            <person name="Goffard N."/>
            <person name="Frangeul L."/>
            <person name="Aigle M."/>
            <person name="Anthouard V."/>
            <person name="Babour A."/>
            <person name="Barbe V."/>
            <person name="Barnay S."/>
            <person name="Blanchin S."/>
            <person name="Beckerich J.-M."/>
            <person name="Beyne E."/>
            <person name="Bleykasten C."/>
            <person name="Boisrame A."/>
            <person name="Boyer J."/>
            <person name="Cattolico L."/>
            <person name="Confanioleri F."/>
            <person name="de Daruvar A."/>
            <person name="Despons L."/>
            <person name="Fabre E."/>
            <person name="Fairhead C."/>
            <person name="Ferry-Dumazet H."/>
            <person name="Groppi A."/>
            <person name="Hantraye F."/>
            <person name="Hennequin C."/>
            <person name="Jauniaux N."/>
            <person name="Joyet P."/>
            <person name="Kachouri R."/>
            <person name="Kerrest A."/>
            <person name="Koszul R."/>
            <person name="Lemaire M."/>
            <person name="Lesur I."/>
            <person name="Ma L."/>
            <person name="Muller H."/>
            <person name="Nicaud J.-M."/>
            <person name="Nikolski M."/>
            <person name="Oztas S."/>
            <person name="Ozier-Kalogeropoulos O."/>
            <person name="Pellenz S."/>
            <person name="Potier S."/>
            <person name="Richard G.-F."/>
            <person name="Straub M.-L."/>
            <person name="Suleau A."/>
            <person name="Swennen D."/>
            <person name="Tekaia F."/>
            <person name="Wesolowski-Louvel M."/>
            <person name="Westhof E."/>
            <person name="Wirth B."/>
            <person name="Zeniou-Meyer M."/>
            <person name="Zivanovic Y."/>
            <person name="Bolotin-Fukuhara M."/>
            <person name="Thierry A."/>
            <person name="Bouchier C."/>
            <person name="Caudron B."/>
            <person name="Scarpelli C."/>
            <person name="Gaillardin C."/>
            <person name="Weissenbach J."/>
            <person name="Wincker P."/>
            <person name="Souciet J.-L."/>
        </authorList>
    </citation>
    <scope>NUCLEOTIDE SEQUENCE [LARGE SCALE GENOMIC DNA]</scope>
    <source>
        <strain>ATCC 8585 / CBS 2359 / DSM 70799 / NBRC 1267 / NRRL Y-1140 / WM37</strain>
    </source>
</reference>
<feature type="chain" id="PRO_0000068791" description="Isocitrate lyase">
    <location>
        <begin position="1"/>
        <end position="542"/>
    </location>
</feature>
<feature type="active site" description="Proton acceptor" evidence="3">
    <location>
        <position position="208"/>
    </location>
</feature>
<feature type="binding site" evidence="3">
    <location>
        <begin position="102"/>
        <end position="104"/>
    </location>
    <ligand>
        <name>substrate</name>
    </ligand>
</feature>
<feature type="binding site" evidence="3">
    <location>
        <position position="170"/>
    </location>
    <ligand>
        <name>Mg(2+)</name>
        <dbReference type="ChEBI" id="CHEBI:18420"/>
    </ligand>
</feature>
<feature type="binding site" evidence="3">
    <location>
        <begin position="209"/>
        <end position="210"/>
    </location>
    <ligand>
        <name>substrate</name>
    </ligand>
</feature>
<feature type="binding site" evidence="3">
    <location>
        <position position="245"/>
    </location>
    <ligand>
        <name>substrate</name>
    </ligand>
</feature>
<feature type="binding site" evidence="3">
    <location>
        <begin position="428"/>
        <end position="432"/>
    </location>
    <ligand>
        <name>substrate</name>
    </ligand>
</feature>
<feature type="binding site" evidence="3">
    <location>
        <position position="462"/>
    </location>
    <ligand>
        <name>substrate</name>
    </ligand>
</feature>
<proteinExistence type="evidence at transcript level"/>